<accession>Q82030</accession>
<feature type="chain" id="PRO_0000369468" description="Non-structural glycoprotein 4">
    <location>
        <begin position="1"/>
        <end position="175"/>
    </location>
</feature>
<feature type="topological domain" description="Lumenal" evidence="1">
    <location>
        <begin position="1"/>
        <end position="28"/>
    </location>
</feature>
<feature type="transmembrane region" description="Helical; Signal-anchor for type III membrane protein" evidence="1">
    <location>
        <begin position="29"/>
        <end position="51"/>
    </location>
</feature>
<feature type="topological domain" description="Cytoplasmic" evidence="1">
    <location>
        <begin position="52"/>
        <end position="175"/>
    </location>
</feature>
<feature type="binding site" evidence="1">
    <location>
        <position position="120"/>
    </location>
    <ligand>
        <name>Ca(2+)</name>
        <dbReference type="ChEBI" id="CHEBI:29108"/>
    </ligand>
</feature>
<feature type="binding site" evidence="1">
    <location>
        <position position="123"/>
    </location>
    <ligand>
        <name>Ca(2+)</name>
        <dbReference type="ChEBI" id="CHEBI:29108"/>
    </ligand>
</feature>
<feature type="glycosylation site" description="N-linked (GlcNAc...) asparagine; by host" evidence="1">
    <location>
        <position position="8"/>
    </location>
</feature>
<feature type="glycosylation site" description="N-linked (GlcNAc...) asparagine; by host" evidence="1">
    <location>
        <position position="18"/>
    </location>
</feature>
<organismHost>
    <name type="scientific">Homo sapiens</name>
    <name type="common">Human</name>
    <dbReference type="NCBI Taxonomy" id="9606"/>
</organismHost>
<protein>
    <recommendedName>
        <fullName evidence="1">Non-structural glycoprotein 4</fullName>
        <shortName evidence="1">NSP4</shortName>
    </recommendedName>
    <alternativeName>
        <fullName evidence="1">NCVP5</fullName>
    </alternativeName>
    <alternativeName>
        <fullName evidence="1">NS28</fullName>
    </alternativeName>
</protein>
<sequence>MDKFTDLNYTLNVITLMNSTLHTILEDPGMAYFPYIASVLTVLFTLHKASIPTMKIALKTSKCSYKVVKYCTVTIFNTLLKLAGYKEQITTKDEIEKQMDRVVKEMRRQLEMIDRLTTREIEQVELLKRIHDKLMVQSTGEIDMRKEINQKNVKTLEEWESGRNPYEPKEVTAAM</sequence>
<dbReference type="EMBL" id="U59105">
    <property type="protein sequence ID" value="AAB81291.1"/>
    <property type="molecule type" value="mRNA"/>
</dbReference>
<dbReference type="GO" id="GO:0005576">
    <property type="term" value="C:extracellular region"/>
    <property type="evidence" value="ECO:0007669"/>
    <property type="project" value="UniProtKB-SubCell"/>
</dbReference>
<dbReference type="GO" id="GO:0044155">
    <property type="term" value="C:host caveola"/>
    <property type="evidence" value="ECO:0007669"/>
    <property type="project" value="UniProtKB-SubCell"/>
</dbReference>
<dbReference type="GO" id="GO:0044169">
    <property type="term" value="C:host cell rough endoplasmic reticulum membrane"/>
    <property type="evidence" value="ECO:0007669"/>
    <property type="project" value="UniProtKB-SubCell"/>
</dbReference>
<dbReference type="GO" id="GO:0016020">
    <property type="term" value="C:membrane"/>
    <property type="evidence" value="ECO:0007669"/>
    <property type="project" value="UniProtKB-UniRule"/>
</dbReference>
<dbReference type="GO" id="GO:0015267">
    <property type="term" value="F:channel activity"/>
    <property type="evidence" value="ECO:0007669"/>
    <property type="project" value="UniProtKB-KW"/>
</dbReference>
<dbReference type="GO" id="GO:0046872">
    <property type="term" value="F:metal ion binding"/>
    <property type="evidence" value="ECO:0007669"/>
    <property type="project" value="UniProtKB-UniRule"/>
</dbReference>
<dbReference type="GO" id="GO:0090729">
    <property type="term" value="F:toxin activity"/>
    <property type="evidence" value="ECO:0007669"/>
    <property type="project" value="UniProtKB-UniRule"/>
</dbReference>
<dbReference type="GO" id="GO:0034220">
    <property type="term" value="P:monoatomic ion transmembrane transport"/>
    <property type="evidence" value="ECO:0007669"/>
    <property type="project" value="UniProtKB-KW"/>
</dbReference>
<dbReference type="GO" id="GO:0039520">
    <property type="term" value="P:symbiont-mediated activation of host autophagy"/>
    <property type="evidence" value="ECO:0007669"/>
    <property type="project" value="UniProtKB-KW"/>
</dbReference>
<dbReference type="GO" id="GO:0016032">
    <property type="term" value="P:viral process"/>
    <property type="evidence" value="ECO:0007669"/>
    <property type="project" value="UniProtKB-UniRule"/>
</dbReference>
<dbReference type="FunFam" id="1.20.5.430:FF:000005">
    <property type="entry name" value="Non-structural glycoprotein 4"/>
    <property type="match status" value="1"/>
</dbReference>
<dbReference type="Gene3D" id="1.20.5.430">
    <property type="match status" value="1"/>
</dbReference>
<dbReference type="HAMAP" id="MF_04091">
    <property type="entry name" value="ROTA_NSP4"/>
    <property type="match status" value="1"/>
</dbReference>
<dbReference type="InterPro" id="IPR002107">
    <property type="entry name" value="Rotavirus_NSP4"/>
</dbReference>
<dbReference type="Pfam" id="PF01452">
    <property type="entry name" value="Rota_NSP4"/>
    <property type="match status" value="1"/>
</dbReference>
<dbReference type="SUPFAM" id="SSF58030">
    <property type="entry name" value="Rotavirus nonstructural proteins"/>
    <property type="match status" value="1"/>
</dbReference>
<name>NSP4_ROTH1</name>
<evidence type="ECO:0000255" key="1">
    <source>
        <dbReference type="HAMAP-Rule" id="MF_04091"/>
    </source>
</evidence>
<proteinExistence type="evidence at transcript level"/>
<organism>
    <name type="scientific">Rotavirus A (isolate RVA/Human/Sweden/1076/1983/G2P2A[6])</name>
    <name type="common">RV-A</name>
    <dbReference type="NCBI Taxonomy" id="10944"/>
    <lineage>
        <taxon>Viruses</taxon>
        <taxon>Riboviria</taxon>
        <taxon>Orthornavirae</taxon>
        <taxon>Duplornaviricota</taxon>
        <taxon>Resentoviricetes</taxon>
        <taxon>Reovirales</taxon>
        <taxon>Sedoreoviridae</taxon>
        <taxon>Rotavirus</taxon>
        <taxon>Rotavirus A</taxon>
    </lineage>
</organism>
<reference key="1">
    <citation type="journal article" date="1997" name="Virology">
        <title>Genetic characterization of the rotavirus nonstructural protein, NSP4.</title>
        <authorList>
            <person name="Kirkwood C.D."/>
            <person name="Palombo E.A."/>
        </authorList>
    </citation>
    <scope>NUCLEOTIDE SEQUENCE [MRNA]</scope>
</reference>
<comment type="function">
    <text evidence="1">Plays an essential role in the virus replication cycle by acting as a viroporin. Creates a pore in the host endoplasmic reticulum and as a consequence releases Ca(2+) in the cytoplasm of infected cell. In turn, high levels of cytoplasmic calcium trigger membrane trafficking and transport of viral ER-associated proteins to viroplasms, sites of viral genome replication and immature particle assembly.</text>
</comment>
<comment type="function">
    <text evidence="1">The secreted form acts as an enterotoxin that causes phospholipase C-dependent elevation of the intracellular calcium concentration in host intestinal mucosa cells. Increased concentration of intracellular calcium disrupts the cytoskeleton and the tight junctions, raising the paracellular permeability. Potentiates chloride ion secretion through a calcium ion-dependent signaling pathway, inducing age-dependent diarrhea. To perform this enterotoxigenic role in vivo, NSP4 is released from infected enterocytes in a soluble form capable of diffusing within the intestinal lumen and interacting with host plasma membrane receptors on neighboring epithelial cells such as integrins ITGA1/ITGB1 and ITGA2/ITGB1.</text>
</comment>
<comment type="subunit">
    <text evidence="1">Homotetramer. Interacts with the immature particle in the viroplasm. Interacts with host CAV1, early and late in infection. Interacts with host integrin ITGA1/ITGB1 heterodimer. Interacts with host integrin ITGA2/ITGB1 heterodimer. Interaction with microtubules blocks trafficking to the Golgi apparatus.</text>
</comment>
<comment type="subcellular location">
    <subcellularLocation>
        <location evidence="1">Host rough endoplasmic reticulum membrane</location>
        <topology evidence="1">Single-pass type III membrane protein</topology>
    </subcellularLocation>
    <subcellularLocation>
        <location evidence="1">Host membrane</location>
        <location evidence="1">Host caveola</location>
        <topology evidence="1">Single-pass type III membrane protein</topology>
    </subcellularLocation>
    <subcellularLocation>
        <location evidence="1">Secreted</location>
    </subcellularLocation>
    <text evidence="1">NSP4 also localizes in vesicular structures which contain autophagosomal markers and associate with viroplasms in virus-infected cells. Additionally, a soluble form of glycosylated NSP4 is secreted despite retention of its transmembrane domain.</text>
</comment>
<comment type="domain">
    <text evidence="1">Binds 1 calcium ion per tetramer.</text>
</comment>
<comment type="PTM">
    <text evidence="1">The N-glycosyl content is primarily Man(9)GlcNAc, with a small amount of Man(8)GlcNAc.</text>
</comment>
<comment type="similarity">
    <text evidence="1">Belongs to the rotavirus NSP4 family.</text>
</comment>
<keyword id="KW-1072">Activation of host autophagy by virus</keyword>
<keyword id="KW-0106">Calcium</keyword>
<keyword id="KW-0260">Enterotoxin</keyword>
<keyword id="KW-0325">Glycoprotein</keyword>
<keyword id="KW-1038">Host endoplasmic reticulum</keyword>
<keyword id="KW-1043">Host membrane</keyword>
<keyword id="KW-0945">Host-virus interaction</keyword>
<keyword id="KW-0407">Ion channel</keyword>
<keyword id="KW-0406">Ion transport</keyword>
<keyword id="KW-0472">Membrane</keyword>
<keyword id="KW-0479">Metal-binding</keyword>
<keyword id="KW-0964">Secreted</keyword>
<keyword id="KW-0735">Signal-anchor</keyword>
<keyword id="KW-0800">Toxin</keyword>
<keyword id="KW-0812">Transmembrane</keyword>
<keyword id="KW-1133">Transmembrane helix</keyword>
<keyword id="KW-0813">Transport</keyword>
<keyword id="KW-1182">Viral ion channel</keyword>
<keyword id="KW-0843">Virulence</keyword>